<dbReference type="EC" id="4.2.1.17" evidence="1"/>
<dbReference type="EC" id="5.1.2.3" evidence="1"/>
<dbReference type="EC" id="1.1.1.35" evidence="1"/>
<dbReference type="EMBL" id="CP000783">
    <property type="protein sequence ID" value="ABU76152.1"/>
    <property type="molecule type" value="Genomic_DNA"/>
</dbReference>
<dbReference type="RefSeq" id="WP_012124133.1">
    <property type="nucleotide sequence ID" value="NC_009778.1"/>
</dbReference>
<dbReference type="SMR" id="A7MH81"/>
<dbReference type="KEGG" id="esa:ESA_00882"/>
<dbReference type="PATRIC" id="fig|290339.8.peg.782"/>
<dbReference type="HOGENOM" id="CLU_009834_16_1_6"/>
<dbReference type="UniPathway" id="UPA00659"/>
<dbReference type="Proteomes" id="UP000000260">
    <property type="component" value="Chromosome"/>
</dbReference>
<dbReference type="GO" id="GO:0005737">
    <property type="term" value="C:cytoplasm"/>
    <property type="evidence" value="ECO:0007669"/>
    <property type="project" value="UniProtKB-SubCell"/>
</dbReference>
<dbReference type="GO" id="GO:0008692">
    <property type="term" value="F:3-hydroxybutyryl-CoA epimerase activity"/>
    <property type="evidence" value="ECO:0007669"/>
    <property type="project" value="UniProtKB-UniRule"/>
</dbReference>
<dbReference type="GO" id="GO:0004300">
    <property type="term" value="F:enoyl-CoA hydratase activity"/>
    <property type="evidence" value="ECO:0007669"/>
    <property type="project" value="UniProtKB-UniRule"/>
</dbReference>
<dbReference type="GO" id="GO:0016509">
    <property type="term" value="F:long-chain-3-hydroxyacyl-CoA dehydrogenase activity"/>
    <property type="evidence" value="ECO:0007669"/>
    <property type="project" value="TreeGrafter"/>
</dbReference>
<dbReference type="GO" id="GO:0070403">
    <property type="term" value="F:NAD+ binding"/>
    <property type="evidence" value="ECO:0007669"/>
    <property type="project" value="InterPro"/>
</dbReference>
<dbReference type="GO" id="GO:0006635">
    <property type="term" value="P:fatty acid beta-oxidation"/>
    <property type="evidence" value="ECO:0007669"/>
    <property type="project" value="UniProtKB-UniRule"/>
</dbReference>
<dbReference type="CDD" id="cd06558">
    <property type="entry name" value="crotonase-like"/>
    <property type="match status" value="1"/>
</dbReference>
<dbReference type="FunFam" id="1.10.1040.50:FF:000003">
    <property type="entry name" value="Fatty acid oxidation complex subunit alpha"/>
    <property type="match status" value="1"/>
</dbReference>
<dbReference type="FunFam" id="3.90.226.10:FF:000011">
    <property type="entry name" value="Fatty acid oxidation complex subunit alpha"/>
    <property type="match status" value="1"/>
</dbReference>
<dbReference type="FunFam" id="3.40.50.720:FF:000009">
    <property type="entry name" value="Fatty oxidation complex, alpha subunit"/>
    <property type="match status" value="1"/>
</dbReference>
<dbReference type="Gene3D" id="1.10.1040.50">
    <property type="match status" value="1"/>
</dbReference>
<dbReference type="Gene3D" id="3.90.226.10">
    <property type="entry name" value="2-enoyl-CoA Hydratase, Chain A, domain 1"/>
    <property type="match status" value="1"/>
</dbReference>
<dbReference type="Gene3D" id="3.40.50.720">
    <property type="entry name" value="NAD(P)-binding Rossmann-like Domain"/>
    <property type="match status" value="1"/>
</dbReference>
<dbReference type="HAMAP" id="MF_01617">
    <property type="entry name" value="FadJ"/>
    <property type="match status" value="1"/>
</dbReference>
<dbReference type="InterPro" id="IPR006180">
    <property type="entry name" value="3-OHacyl-CoA_DH_CS"/>
</dbReference>
<dbReference type="InterPro" id="IPR006176">
    <property type="entry name" value="3-OHacyl-CoA_DH_NAD-bd"/>
</dbReference>
<dbReference type="InterPro" id="IPR006108">
    <property type="entry name" value="3HC_DH_C"/>
</dbReference>
<dbReference type="InterPro" id="IPR008927">
    <property type="entry name" value="6-PGluconate_DH-like_C_sf"/>
</dbReference>
<dbReference type="InterPro" id="IPR029045">
    <property type="entry name" value="ClpP/crotonase-like_dom_sf"/>
</dbReference>
<dbReference type="InterPro" id="IPR001753">
    <property type="entry name" value="Enoyl-CoA_hydra/iso"/>
</dbReference>
<dbReference type="InterPro" id="IPR050136">
    <property type="entry name" value="FA_oxidation_alpha_subunit"/>
</dbReference>
<dbReference type="InterPro" id="IPR012802">
    <property type="entry name" value="FadJ"/>
</dbReference>
<dbReference type="InterPro" id="IPR036291">
    <property type="entry name" value="NAD(P)-bd_dom_sf"/>
</dbReference>
<dbReference type="NCBIfam" id="TIGR02440">
    <property type="entry name" value="FadJ"/>
    <property type="match status" value="1"/>
</dbReference>
<dbReference type="NCBIfam" id="NF008363">
    <property type="entry name" value="PRK11154.1"/>
    <property type="match status" value="1"/>
</dbReference>
<dbReference type="PANTHER" id="PTHR43612">
    <property type="entry name" value="TRIFUNCTIONAL ENZYME SUBUNIT ALPHA"/>
    <property type="match status" value="1"/>
</dbReference>
<dbReference type="PANTHER" id="PTHR43612:SF3">
    <property type="entry name" value="TRIFUNCTIONAL ENZYME SUBUNIT ALPHA, MITOCHONDRIAL"/>
    <property type="match status" value="1"/>
</dbReference>
<dbReference type="Pfam" id="PF00725">
    <property type="entry name" value="3HCDH"/>
    <property type="match status" value="2"/>
</dbReference>
<dbReference type="Pfam" id="PF02737">
    <property type="entry name" value="3HCDH_N"/>
    <property type="match status" value="1"/>
</dbReference>
<dbReference type="Pfam" id="PF00378">
    <property type="entry name" value="ECH_1"/>
    <property type="match status" value="1"/>
</dbReference>
<dbReference type="SUPFAM" id="SSF48179">
    <property type="entry name" value="6-phosphogluconate dehydrogenase C-terminal domain-like"/>
    <property type="match status" value="2"/>
</dbReference>
<dbReference type="SUPFAM" id="SSF52096">
    <property type="entry name" value="ClpP/crotonase"/>
    <property type="match status" value="1"/>
</dbReference>
<dbReference type="SUPFAM" id="SSF51735">
    <property type="entry name" value="NAD(P)-binding Rossmann-fold domains"/>
    <property type="match status" value="1"/>
</dbReference>
<dbReference type="PROSITE" id="PS00067">
    <property type="entry name" value="3HCDH"/>
    <property type="match status" value="1"/>
</dbReference>
<accession>A7MH81</accession>
<feature type="chain" id="PRO_1000069487" description="Fatty acid oxidation complex subunit alpha">
    <location>
        <begin position="1"/>
        <end position="717"/>
    </location>
</feature>
<feature type="region of interest" description="Enoyl-CoA hydratase" evidence="1">
    <location>
        <begin position="1"/>
        <end position="190"/>
    </location>
</feature>
<feature type="region of interest" description="3-hydroxyacyl-CoA dehydrogenase" evidence="1">
    <location>
        <begin position="306"/>
        <end position="717"/>
    </location>
</feature>
<feature type="site" description="Important for catalytic activity" evidence="1">
    <location>
        <position position="118"/>
    </location>
</feature>
<feature type="site" description="Important for catalytic activity" evidence="1">
    <location>
        <position position="140"/>
    </location>
</feature>
<keyword id="KW-0963">Cytoplasm</keyword>
<keyword id="KW-0276">Fatty acid metabolism</keyword>
<keyword id="KW-0413">Isomerase</keyword>
<keyword id="KW-0442">Lipid degradation</keyword>
<keyword id="KW-0443">Lipid metabolism</keyword>
<keyword id="KW-0456">Lyase</keyword>
<keyword id="KW-0511">Multifunctional enzyme</keyword>
<keyword id="KW-0520">NAD</keyword>
<keyword id="KW-0560">Oxidoreductase</keyword>
<keyword id="KW-1185">Reference proteome</keyword>
<evidence type="ECO:0000255" key="1">
    <source>
        <dbReference type="HAMAP-Rule" id="MF_01617"/>
    </source>
</evidence>
<sequence length="717" mass="77255">MESTSAFNLQMRPDNVAVVTIDVPGEKMNTLKAEFARDVRAIVKTLRENRDLAGVVFISAKPDNFIAGADINMIAHCQSAQEAEALASQGQQIMAEIRALPVHVVAAIHGACLGGGLELALACHSRICTDDVKTLLGLPEVQLGLLPGSGGTQRLPRLVGVSTALEMILAGKQLRPRQALKAGLVDDVVPQSILLEAAAELAKKRRPAPRRLPVRERLLAGPIGRALLFRMVTQKTHQKTHGNYPAAQRIIDVVRTGLEQGSASGYQAEARAFGELAMTPESAALRGLFFATTELKKETGSEAAPRALHSVGVLGGGLMGGGIAYVTATKARLPVRIKDISEKGINHALKYSWDLLEKKVRRRHLRASERDAQMALISASTDYRGFHQRDIVVEAVFEDLTLKQNMVAEIEAHTAPHTIFASNTSSLPIGDIAAGATRPEQVIGLHYFSPVDKMPLVEVIPHAGTSAETIATTVQLAKKQGKTPIVVADCAGFYVNRILAPYINEAMRCLMEGESIEKIDEALVKRGFPVGPIQLLDEVGIDVGTKIMPVLERAYGPRFSAPGDAVAAILNDDRKGRKNGRGFYLYPAKGRKSKKQVDPAVYGLIGVKPGGKLSGEEIAERCVMMMLNEAARCLDEGVVRSARDGDIGAVFGIGFPPFLGGPFRYMDTLGAAAMATTLTRLATRYGDRFTPCDRLLRMAQTGQTFWLAGNLQAEMTV</sequence>
<name>FADJ_CROS8</name>
<comment type="function">
    <text evidence="1">Catalyzes the formation of a hydroxyacyl-CoA by addition of water on enoyl-CoA. Also exhibits 3-hydroxyacyl-CoA epimerase and 3-hydroxyacyl-CoA dehydrogenase activities.</text>
</comment>
<comment type="catalytic activity">
    <reaction evidence="1">
        <text>a (3S)-3-hydroxyacyl-CoA = a (2E)-enoyl-CoA + H2O</text>
        <dbReference type="Rhea" id="RHEA:16105"/>
        <dbReference type="ChEBI" id="CHEBI:15377"/>
        <dbReference type="ChEBI" id="CHEBI:57318"/>
        <dbReference type="ChEBI" id="CHEBI:58856"/>
        <dbReference type="EC" id="4.2.1.17"/>
    </reaction>
</comment>
<comment type="catalytic activity">
    <reaction evidence="1">
        <text>a 4-saturated-(3S)-3-hydroxyacyl-CoA = a (3E)-enoyl-CoA + H2O</text>
        <dbReference type="Rhea" id="RHEA:20724"/>
        <dbReference type="ChEBI" id="CHEBI:15377"/>
        <dbReference type="ChEBI" id="CHEBI:58521"/>
        <dbReference type="ChEBI" id="CHEBI:137480"/>
        <dbReference type="EC" id="4.2.1.17"/>
    </reaction>
</comment>
<comment type="catalytic activity">
    <reaction evidence="1">
        <text>a (3S)-3-hydroxyacyl-CoA + NAD(+) = a 3-oxoacyl-CoA + NADH + H(+)</text>
        <dbReference type="Rhea" id="RHEA:22432"/>
        <dbReference type="ChEBI" id="CHEBI:15378"/>
        <dbReference type="ChEBI" id="CHEBI:57318"/>
        <dbReference type="ChEBI" id="CHEBI:57540"/>
        <dbReference type="ChEBI" id="CHEBI:57945"/>
        <dbReference type="ChEBI" id="CHEBI:90726"/>
        <dbReference type="EC" id="1.1.1.35"/>
    </reaction>
</comment>
<comment type="catalytic activity">
    <reaction evidence="1">
        <text>(3S)-3-hydroxybutanoyl-CoA = (3R)-3-hydroxybutanoyl-CoA</text>
        <dbReference type="Rhea" id="RHEA:21760"/>
        <dbReference type="ChEBI" id="CHEBI:57315"/>
        <dbReference type="ChEBI" id="CHEBI:57316"/>
        <dbReference type="EC" id="5.1.2.3"/>
    </reaction>
</comment>
<comment type="pathway">
    <text evidence="1">Lipid metabolism; fatty acid beta-oxidation.</text>
</comment>
<comment type="subunit">
    <text evidence="1">Heterotetramer of two alpha chains (FadJ) and two beta chains (FadI).</text>
</comment>
<comment type="subcellular location">
    <subcellularLocation>
        <location evidence="1">Cytoplasm</location>
    </subcellularLocation>
</comment>
<comment type="similarity">
    <text evidence="1">In the N-terminal section; belongs to the enoyl-CoA hydratase/isomerase family.</text>
</comment>
<comment type="similarity">
    <text evidence="1">In the central section; belongs to the 3-hydroxyacyl-CoA dehydrogenase family.</text>
</comment>
<protein>
    <recommendedName>
        <fullName evidence="1">Fatty acid oxidation complex subunit alpha</fullName>
    </recommendedName>
    <domain>
        <recommendedName>
            <fullName evidence="1">Enoyl-CoA hydratase/3-hydroxybutyryl-CoA epimerase</fullName>
            <ecNumber evidence="1">4.2.1.17</ecNumber>
            <ecNumber evidence="1">5.1.2.3</ecNumber>
        </recommendedName>
    </domain>
    <domain>
        <recommendedName>
            <fullName evidence="1">3-hydroxyacyl-CoA dehydrogenase</fullName>
            <ecNumber evidence="1">1.1.1.35</ecNumber>
        </recommendedName>
    </domain>
</protein>
<reference key="1">
    <citation type="journal article" date="2010" name="PLoS ONE">
        <title>Genome sequence of Cronobacter sakazakii BAA-894 and comparative genomic hybridization analysis with other Cronobacter species.</title>
        <authorList>
            <person name="Kucerova E."/>
            <person name="Clifton S.W."/>
            <person name="Xia X.Q."/>
            <person name="Long F."/>
            <person name="Porwollik S."/>
            <person name="Fulton L."/>
            <person name="Fronick C."/>
            <person name="Minx P."/>
            <person name="Kyung K."/>
            <person name="Warren W."/>
            <person name="Fulton R."/>
            <person name="Feng D."/>
            <person name="Wollam A."/>
            <person name="Shah N."/>
            <person name="Bhonagiri V."/>
            <person name="Nash W.E."/>
            <person name="Hallsworth-Pepin K."/>
            <person name="Wilson R.K."/>
            <person name="McClelland M."/>
            <person name="Forsythe S.J."/>
        </authorList>
    </citation>
    <scope>NUCLEOTIDE SEQUENCE [LARGE SCALE GENOMIC DNA]</scope>
    <source>
        <strain>ATCC BAA-894</strain>
    </source>
</reference>
<gene>
    <name evidence="1" type="primary">fadJ</name>
    <name type="ordered locus">ESA_00882</name>
</gene>
<organism>
    <name type="scientific">Cronobacter sakazakii (strain ATCC BAA-894)</name>
    <name type="common">Enterobacter sakazakii</name>
    <dbReference type="NCBI Taxonomy" id="290339"/>
    <lineage>
        <taxon>Bacteria</taxon>
        <taxon>Pseudomonadati</taxon>
        <taxon>Pseudomonadota</taxon>
        <taxon>Gammaproteobacteria</taxon>
        <taxon>Enterobacterales</taxon>
        <taxon>Enterobacteriaceae</taxon>
        <taxon>Cronobacter</taxon>
    </lineage>
</organism>
<proteinExistence type="inferred from homology"/>